<gene>
    <name type="ORF">F37A4.3</name>
</gene>
<keyword id="KW-1185">Reference proteome</keyword>
<keyword id="KW-0732">Signal</keyword>
<name>YPT3_CAEEL</name>
<accession>P41881</accession>
<reference key="1">
    <citation type="journal article" date="1998" name="Science">
        <title>Genome sequence of the nematode C. elegans: a platform for investigating biology.</title>
        <authorList>
            <consortium name="The C. elegans sequencing consortium"/>
        </authorList>
    </citation>
    <scope>NUCLEOTIDE SEQUENCE [LARGE SCALE GENOMIC DNA]</scope>
    <source>
        <strain>Bristol N2</strain>
    </source>
</reference>
<evidence type="ECO:0000255" key="1"/>
<feature type="signal peptide" evidence="1">
    <location>
        <begin position="1"/>
        <end position="20"/>
    </location>
</feature>
<feature type="chain" id="PRO_0000065327" description="Uncharacterized protein F37A4.3">
    <location>
        <begin position="21"/>
        <end position="272"/>
    </location>
</feature>
<dbReference type="EMBL" id="FO081312">
    <property type="protein sequence ID" value="CCD70701.2"/>
    <property type="molecule type" value="Genomic_DNA"/>
</dbReference>
<dbReference type="PIR" id="S44640">
    <property type="entry name" value="S44640"/>
</dbReference>
<dbReference type="RefSeq" id="NP_498472.2">
    <property type="nucleotide sequence ID" value="NM_066071.5"/>
</dbReference>
<dbReference type="FunCoup" id="P41881">
    <property type="interactions" value="842"/>
</dbReference>
<dbReference type="STRING" id="6239.F37A4.3.1"/>
<dbReference type="PaxDb" id="6239-F37A4.3"/>
<dbReference type="EnsemblMetazoa" id="F37A4.3.1">
    <property type="protein sequence ID" value="F37A4.3.1"/>
    <property type="gene ID" value="WBGene00018133"/>
</dbReference>
<dbReference type="GeneID" id="185403"/>
<dbReference type="KEGG" id="cel:CELE_F37A4.3"/>
<dbReference type="UCSC" id="F37A4.3">
    <property type="organism name" value="c. elegans"/>
</dbReference>
<dbReference type="AGR" id="WB:WBGene00018133"/>
<dbReference type="CTD" id="185403"/>
<dbReference type="WormBase" id="F37A4.3">
    <property type="protein sequence ID" value="CE47709"/>
    <property type="gene ID" value="WBGene00018133"/>
</dbReference>
<dbReference type="eggNOG" id="ENOG502TG20">
    <property type="taxonomic scope" value="Eukaryota"/>
</dbReference>
<dbReference type="HOGENOM" id="CLU_089433_0_0_1"/>
<dbReference type="InParanoid" id="P41881"/>
<dbReference type="OMA" id="HLPIYTI"/>
<dbReference type="OrthoDB" id="5773424at2759"/>
<dbReference type="Reactome" id="R-CEL-913709">
    <property type="pathway name" value="O-linked glycosylation of mucins"/>
</dbReference>
<dbReference type="PRO" id="PR:P41881"/>
<dbReference type="Proteomes" id="UP000001940">
    <property type="component" value="Chromosome III"/>
</dbReference>
<dbReference type="Bgee" id="WBGene00018133">
    <property type="expression patterns" value="Expressed in embryo and 3 other cell types or tissues"/>
</dbReference>
<dbReference type="GO" id="GO:0016263">
    <property type="term" value="F:glycoprotein-N-acetylgalactosamine 3-beta-galactosyltransferase activity"/>
    <property type="evidence" value="ECO:0000318"/>
    <property type="project" value="GO_Central"/>
</dbReference>
<dbReference type="Gene3D" id="3.90.550.50">
    <property type="match status" value="1"/>
</dbReference>
<proteinExistence type="inferred from homology"/>
<sequence>MMEPKSIFLLGLLLFRVGKLMRNDKLAWSAEYEAKKFKFYHNTSLFLTLQSTGPEMTNLCKKSWCDKVDDYFVVPHHYVNWQKPTEQWLIHHFSKMILHTRRLPQQAQWYMFAFDNNYFFVERLIKELSKFDSHLPIYTILRDFHADIQHKPVLIFSRSALNTFYDLEEENCSENAENVEEWLTTCMSIPPITISVDRSKKSRIFAIKRHFQVDEMKTMPNDYHDDKDYIHRHSSSLLSFTNLSLEDLKLLPIFVEKVQGGYKKKAASKILF</sequence>
<organism>
    <name type="scientific">Caenorhabditis elegans</name>
    <dbReference type="NCBI Taxonomy" id="6239"/>
    <lineage>
        <taxon>Eukaryota</taxon>
        <taxon>Metazoa</taxon>
        <taxon>Ecdysozoa</taxon>
        <taxon>Nematoda</taxon>
        <taxon>Chromadorea</taxon>
        <taxon>Rhabditida</taxon>
        <taxon>Rhabditina</taxon>
        <taxon>Rhabditomorpha</taxon>
        <taxon>Rhabditoidea</taxon>
        <taxon>Rhabditidae</taxon>
        <taxon>Peloderinae</taxon>
        <taxon>Caenorhabditis</taxon>
    </lineage>
</organism>
<protein>
    <recommendedName>
        <fullName>Uncharacterized protein F37A4.3</fullName>
    </recommendedName>
</protein>